<keyword id="KW-1185">Reference proteome</keyword>
<keyword id="KW-0687">Ribonucleoprotein</keyword>
<keyword id="KW-0689">Ribosomal protein</keyword>
<keyword id="KW-0694">RNA-binding</keyword>
<keyword id="KW-0699">rRNA-binding</keyword>
<gene>
    <name evidence="1" type="primary">rpsK</name>
    <name type="ordered locus">Cgl0562</name>
    <name type="ordered locus">cg0653</name>
</gene>
<reference key="1">
    <citation type="journal article" date="2003" name="Appl. Microbiol. Biotechnol.">
        <title>The Corynebacterium glutamicum genome: features and impacts on biotechnological processes.</title>
        <authorList>
            <person name="Ikeda M."/>
            <person name="Nakagawa S."/>
        </authorList>
    </citation>
    <scope>NUCLEOTIDE SEQUENCE [LARGE SCALE GENOMIC DNA]</scope>
    <source>
        <strain>ATCC 13032 / DSM 20300 / JCM 1318 / BCRC 11384 / CCUG 27702 / LMG 3730 / NBRC 12168 / NCIMB 10025 / NRRL B-2784 / 534</strain>
    </source>
</reference>
<reference key="2">
    <citation type="journal article" date="2003" name="J. Biotechnol.">
        <title>The complete Corynebacterium glutamicum ATCC 13032 genome sequence and its impact on the production of L-aspartate-derived amino acids and vitamins.</title>
        <authorList>
            <person name="Kalinowski J."/>
            <person name="Bathe B."/>
            <person name="Bartels D."/>
            <person name="Bischoff N."/>
            <person name="Bott M."/>
            <person name="Burkovski A."/>
            <person name="Dusch N."/>
            <person name="Eggeling L."/>
            <person name="Eikmanns B.J."/>
            <person name="Gaigalat L."/>
            <person name="Goesmann A."/>
            <person name="Hartmann M."/>
            <person name="Huthmacher K."/>
            <person name="Kraemer R."/>
            <person name="Linke B."/>
            <person name="McHardy A.C."/>
            <person name="Meyer F."/>
            <person name="Moeckel B."/>
            <person name="Pfefferle W."/>
            <person name="Puehler A."/>
            <person name="Rey D.A."/>
            <person name="Rueckert C."/>
            <person name="Rupp O."/>
            <person name="Sahm H."/>
            <person name="Wendisch V.F."/>
            <person name="Wiegraebe I."/>
            <person name="Tauch A."/>
        </authorList>
    </citation>
    <scope>NUCLEOTIDE SEQUENCE [LARGE SCALE GENOMIC DNA]</scope>
    <source>
        <strain>ATCC 13032 / DSM 20300 / JCM 1318 / BCRC 11384 / CCUG 27702 / LMG 3730 / NBRC 12168 / NCIMB 10025 / NRRL B-2784 / 534</strain>
    </source>
</reference>
<accession>Q8NSV5</accession>
<feature type="chain" id="PRO_0000123139" description="Small ribosomal subunit protein uS11">
    <location>
        <begin position="1"/>
        <end position="134"/>
    </location>
</feature>
<comment type="function">
    <text evidence="1">Located on the platform of the 30S subunit, it bridges several disparate RNA helices of the 16S rRNA. Forms part of the Shine-Dalgarno cleft in the 70S ribosome.</text>
</comment>
<comment type="subunit">
    <text evidence="1">Part of the 30S ribosomal subunit. Interacts with proteins S7 and S18. Binds to IF-3.</text>
</comment>
<comment type="similarity">
    <text evidence="1">Belongs to the universal ribosomal protein uS11 family.</text>
</comment>
<name>RS11_CORGL</name>
<proteinExistence type="inferred from homology"/>
<protein>
    <recommendedName>
        <fullName evidence="1">Small ribosomal subunit protein uS11</fullName>
    </recommendedName>
    <alternativeName>
        <fullName evidence="2">30S ribosomal protein S11</fullName>
    </alternativeName>
</protein>
<evidence type="ECO:0000255" key="1">
    <source>
        <dbReference type="HAMAP-Rule" id="MF_01310"/>
    </source>
</evidence>
<evidence type="ECO:0000305" key="2"/>
<sequence>MPPKARTNARRTGRRVVKKNVANGNAYIKSTFNNTIVSITDTNGAVISWASSGHVGFKGSRKSTPFAAQMAAENAARKAMDHGMKKVDVFVKGPGSGRETAIRSLQAAGLEIGSISDVTPQPHNGCRPPKRRRV</sequence>
<organism>
    <name type="scientific">Corynebacterium glutamicum (strain ATCC 13032 / DSM 20300 / JCM 1318 / BCRC 11384 / CCUG 27702 / LMG 3730 / NBRC 12168 / NCIMB 10025 / NRRL B-2784 / 534)</name>
    <dbReference type="NCBI Taxonomy" id="196627"/>
    <lineage>
        <taxon>Bacteria</taxon>
        <taxon>Bacillati</taxon>
        <taxon>Actinomycetota</taxon>
        <taxon>Actinomycetes</taxon>
        <taxon>Mycobacteriales</taxon>
        <taxon>Corynebacteriaceae</taxon>
        <taxon>Corynebacterium</taxon>
    </lineage>
</organism>
<dbReference type="EMBL" id="BA000036">
    <property type="protein sequence ID" value="BAB97955.1"/>
    <property type="molecule type" value="Genomic_DNA"/>
</dbReference>
<dbReference type="EMBL" id="BX927149">
    <property type="protein sequence ID" value="CAF19268.1"/>
    <property type="molecule type" value="Genomic_DNA"/>
</dbReference>
<dbReference type="RefSeq" id="NP_599799.1">
    <property type="nucleotide sequence ID" value="NC_003450.3"/>
</dbReference>
<dbReference type="RefSeq" id="WP_003854428.1">
    <property type="nucleotide sequence ID" value="NC_006958.1"/>
</dbReference>
<dbReference type="SMR" id="Q8NSV5"/>
<dbReference type="STRING" id="196627.cg0653"/>
<dbReference type="GeneID" id="1018567"/>
<dbReference type="KEGG" id="cgb:cg0653"/>
<dbReference type="KEGG" id="cgl:Cgl0562"/>
<dbReference type="PATRIC" id="fig|196627.13.peg.554"/>
<dbReference type="eggNOG" id="COG0100">
    <property type="taxonomic scope" value="Bacteria"/>
</dbReference>
<dbReference type="HOGENOM" id="CLU_072439_5_0_11"/>
<dbReference type="OrthoDB" id="9806415at2"/>
<dbReference type="BioCyc" id="CORYNE:G18NG-10124-MONOMER"/>
<dbReference type="Proteomes" id="UP000000582">
    <property type="component" value="Chromosome"/>
</dbReference>
<dbReference type="Proteomes" id="UP000001009">
    <property type="component" value="Chromosome"/>
</dbReference>
<dbReference type="GO" id="GO:1990904">
    <property type="term" value="C:ribonucleoprotein complex"/>
    <property type="evidence" value="ECO:0007669"/>
    <property type="project" value="UniProtKB-KW"/>
</dbReference>
<dbReference type="GO" id="GO:0005840">
    <property type="term" value="C:ribosome"/>
    <property type="evidence" value="ECO:0007669"/>
    <property type="project" value="UniProtKB-KW"/>
</dbReference>
<dbReference type="GO" id="GO:0019843">
    <property type="term" value="F:rRNA binding"/>
    <property type="evidence" value="ECO:0007669"/>
    <property type="project" value="UniProtKB-UniRule"/>
</dbReference>
<dbReference type="GO" id="GO:0003735">
    <property type="term" value="F:structural constituent of ribosome"/>
    <property type="evidence" value="ECO:0007669"/>
    <property type="project" value="InterPro"/>
</dbReference>
<dbReference type="GO" id="GO:0006412">
    <property type="term" value="P:translation"/>
    <property type="evidence" value="ECO:0007669"/>
    <property type="project" value="UniProtKB-UniRule"/>
</dbReference>
<dbReference type="FunFam" id="3.30.420.80:FF:000001">
    <property type="entry name" value="30S ribosomal protein S11"/>
    <property type="match status" value="1"/>
</dbReference>
<dbReference type="Gene3D" id="3.30.420.80">
    <property type="entry name" value="Ribosomal protein S11"/>
    <property type="match status" value="1"/>
</dbReference>
<dbReference type="HAMAP" id="MF_01310">
    <property type="entry name" value="Ribosomal_uS11"/>
    <property type="match status" value="1"/>
</dbReference>
<dbReference type="InterPro" id="IPR001971">
    <property type="entry name" value="Ribosomal_uS11"/>
</dbReference>
<dbReference type="InterPro" id="IPR019981">
    <property type="entry name" value="Ribosomal_uS11_bac-type"/>
</dbReference>
<dbReference type="InterPro" id="IPR018102">
    <property type="entry name" value="Ribosomal_uS11_CS"/>
</dbReference>
<dbReference type="InterPro" id="IPR036967">
    <property type="entry name" value="Ribosomal_uS11_sf"/>
</dbReference>
<dbReference type="NCBIfam" id="NF003698">
    <property type="entry name" value="PRK05309.1"/>
    <property type="match status" value="1"/>
</dbReference>
<dbReference type="NCBIfam" id="TIGR03632">
    <property type="entry name" value="uS11_bact"/>
    <property type="match status" value="1"/>
</dbReference>
<dbReference type="PANTHER" id="PTHR11759">
    <property type="entry name" value="40S RIBOSOMAL PROTEIN S14/30S RIBOSOMAL PROTEIN S11"/>
    <property type="match status" value="1"/>
</dbReference>
<dbReference type="Pfam" id="PF00411">
    <property type="entry name" value="Ribosomal_S11"/>
    <property type="match status" value="1"/>
</dbReference>
<dbReference type="PIRSF" id="PIRSF002131">
    <property type="entry name" value="Ribosomal_S11"/>
    <property type="match status" value="1"/>
</dbReference>
<dbReference type="SUPFAM" id="SSF53137">
    <property type="entry name" value="Translational machinery components"/>
    <property type="match status" value="1"/>
</dbReference>
<dbReference type="PROSITE" id="PS00054">
    <property type="entry name" value="RIBOSOMAL_S11"/>
    <property type="match status" value="1"/>
</dbReference>